<proteinExistence type="inferred from homology"/>
<reference key="1">
    <citation type="journal article" date="2008" name="J. Bacteriol.">
        <title>Comparative genome sequence analysis of multidrug-resistant Acinetobacter baumannii.</title>
        <authorList>
            <person name="Adams M.D."/>
            <person name="Goglin K."/>
            <person name="Molyneaux N."/>
            <person name="Hujer K.M."/>
            <person name="Lavender H."/>
            <person name="Jamison J.J."/>
            <person name="MacDonald I.J."/>
            <person name="Martin K.M."/>
            <person name="Russo T."/>
            <person name="Campagnari A.A."/>
            <person name="Hujer A.M."/>
            <person name="Bonomo R.A."/>
            <person name="Gill S.R."/>
        </authorList>
    </citation>
    <scope>NUCLEOTIDE SEQUENCE [LARGE SCALE GENOMIC DNA]</scope>
    <source>
        <strain>AB0057</strain>
    </source>
</reference>
<protein>
    <recommendedName>
        <fullName evidence="1">ATP-dependent Clp protease ATP-binding subunit ClpX</fullName>
    </recommendedName>
</protein>
<evidence type="ECO:0000255" key="1">
    <source>
        <dbReference type="HAMAP-Rule" id="MF_00175"/>
    </source>
</evidence>
<evidence type="ECO:0000255" key="2">
    <source>
        <dbReference type="PROSITE-ProRule" id="PRU01250"/>
    </source>
</evidence>
<sequence length="437" mass="48083">MSEHPQGQKHCSFCGKTQSEVGKLIAGEDAYICNECVDVCLDLVQTSQQVEAGDWASKALPKPHEIRAALDQYVIGQDLAKKTLSVAVYNHYKRLKVGQSGHVSKDVEIAKSNILLIGPTGSGKTLLAQTLARLLDVPFAMADATTLTEAGYVGEDVENIVQKLLQKADYDVEKAQKGIIYIDEIDKITRKSENPSITRDVSGEGVQQALLKMIEGTVASIPPQGGRKHPQQEFIQIDTSNILFICGGAFAGLEKIVQQRQEKGGIGFTADVKNKDETKKLAELFRQVEPTDLVKFGLIPEFIGRLPVIATLEELDEEALMQILTEPKNALTRQYQYLFNMENVDLVFEDSALRAVAKRALERNTGARGLRSILENVLLETMYDLPSRTDVGTVFINEAVINGEAEPVYKSERQPKEAVTHESVAKADLKVIDSKSA</sequence>
<gene>
    <name evidence="1" type="primary">clpX</name>
    <name type="ordered locus">AB57_0581</name>
</gene>
<dbReference type="EMBL" id="CP001182">
    <property type="protein sequence ID" value="ACJ40002.1"/>
    <property type="molecule type" value="Genomic_DNA"/>
</dbReference>
<dbReference type="RefSeq" id="WP_001289250.1">
    <property type="nucleotide sequence ID" value="NC_011586.2"/>
</dbReference>
<dbReference type="SMR" id="B7I5E4"/>
<dbReference type="GeneID" id="92892482"/>
<dbReference type="KEGG" id="abn:AB57_0581"/>
<dbReference type="HOGENOM" id="CLU_014218_8_2_6"/>
<dbReference type="Proteomes" id="UP000007094">
    <property type="component" value="Chromosome"/>
</dbReference>
<dbReference type="GO" id="GO:0009376">
    <property type="term" value="C:HslUV protease complex"/>
    <property type="evidence" value="ECO:0007669"/>
    <property type="project" value="TreeGrafter"/>
</dbReference>
<dbReference type="GO" id="GO:0005524">
    <property type="term" value="F:ATP binding"/>
    <property type="evidence" value="ECO:0007669"/>
    <property type="project" value="UniProtKB-UniRule"/>
</dbReference>
<dbReference type="GO" id="GO:0016887">
    <property type="term" value="F:ATP hydrolysis activity"/>
    <property type="evidence" value="ECO:0007669"/>
    <property type="project" value="InterPro"/>
</dbReference>
<dbReference type="GO" id="GO:0140662">
    <property type="term" value="F:ATP-dependent protein folding chaperone"/>
    <property type="evidence" value="ECO:0007669"/>
    <property type="project" value="InterPro"/>
</dbReference>
<dbReference type="GO" id="GO:0046983">
    <property type="term" value="F:protein dimerization activity"/>
    <property type="evidence" value="ECO:0007669"/>
    <property type="project" value="InterPro"/>
</dbReference>
<dbReference type="GO" id="GO:0051082">
    <property type="term" value="F:unfolded protein binding"/>
    <property type="evidence" value="ECO:0007669"/>
    <property type="project" value="UniProtKB-UniRule"/>
</dbReference>
<dbReference type="GO" id="GO:0008270">
    <property type="term" value="F:zinc ion binding"/>
    <property type="evidence" value="ECO:0007669"/>
    <property type="project" value="InterPro"/>
</dbReference>
<dbReference type="GO" id="GO:0051301">
    <property type="term" value="P:cell division"/>
    <property type="evidence" value="ECO:0007669"/>
    <property type="project" value="TreeGrafter"/>
</dbReference>
<dbReference type="GO" id="GO:0051603">
    <property type="term" value="P:proteolysis involved in protein catabolic process"/>
    <property type="evidence" value="ECO:0007669"/>
    <property type="project" value="TreeGrafter"/>
</dbReference>
<dbReference type="CDD" id="cd19497">
    <property type="entry name" value="RecA-like_ClpX"/>
    <property type="match status" value="1"/>
</dbReference>
<dbReference type="FunFam" id="1.10.8.60:FF:000002">
    <property type="entry name" value="ATP-dependent Clp protease ATP-binding subunit ClpX"/>
    <property type="match status" value="1"/>
</dbReference>
<dbReference type="FunFam" id="3.40.50.300:FF:000005">
    <property type="entry name" value="ATP-dependent Clp protease ATP-binding subunit ClpX"/>
    <property type="match status" value="1"/>
</dbReference>
<dbReference type="Gene3D" id="1.10.8.60">
    <property type="match status" value="1"/>
</dbReference>
<dbReference type="Gene3D" id="6.20.220.10">
    <property type="entry name" value="ClpX chaperone, C4-type zinc finger domain"/>
    <property type="match status" value="1"/>
</dbReference>
<dbReference type="Gene3D" id="3.40.50.300">
    <property type="entry name" value="P-loop containing nucleotide triphosphate hydrolases"/>
    <property type="match status" value="1"/>
</dbReference>
<dbReference type="HAMAP" id="MF_00175">
    <property type="entry name" value="ClpX"/>
    <property type="match status" value="1"/>
</dbReference>
<dbReference type="InterPro" id="IPR003593">
    <property type="entry name" value="AAA+_ATPase"/>
</dbReference>
<dbReference type="InterPro" id="IPR050052">
    <property type="entry name" value="ATP-dep_Clp_protease_ClpX"/>
</dbReference>
<dbReference type="InterPro" id="IPR003959">
    <property type="entry name" value="ATPase_AAA_core"/>
</dbReference>
<dbReference type="InterPro" id="IPR019489">
    <property type="entry name" value="Clp_ATPase_C"/>
</dbReference>
<dbReference type="InterPro" id="IPR004487">
    <property type="entry name" value="Clp_protease_ATP-bd_su_ClpX"/>
</dbReference>
<dbReference type="InterPro" id="IPR046425">
    <property type="entry name" value="ClpX_bact"/>
</dbReference>
<dbReference type="InterPro" id="IPR027417">
    <property type="entry name" value="P-loop_NTPase"/>
</dbReference>
<dbReference type="InterPro" id="IPR010603">
    <property type="entry name" value="Znf_CppX_C4"/>
</dbReference>
<dbReference type="InterPro" id="IPR038366">
    <property type="entry name" value="Znf_CppX_C4_sf"/>
</dbReference>
<dbReference type="NCBIfam" id="TIGR00382">
    <property type="entry name" value="clpX"/>
    <property type="match status" value="1"/>
</dbReference>
<dbReference type="NCBIfam" id="NF003745">
    <property type="entry name" value="PRK05342.1"/>
    <property type="match status" value="1"/>
</dbReference>
<dbReference type="PANTHER" id="PTHR48102:SF7">
    <property type="entry name" value="ATP-DEPENDENT CLP PROTEASE ATP-BINDING SUBUNIT CLPX-LIKE, MITOCHONDRIAL"/>
    <property type="match status" value="1"/>
</dbReference>
<dbReference type="PANTHER" id="PTHR48102">
    <property type="entry name" value="ATP-DEPENDENT CLP PROTEASE ATP-BINDING SUBUNIT CLPX-LIKE, MITOCHONDRIAL-RELATED"/>
    <property type="match status" value="1"/>
</dbReference>
<dbReference type="Pfam" id="PF07724">
    <property type="entry name" value="AAA_2"/>
    <property type="match status" value="1"/>
</dbReference>
<dbReference type="Pfam" id="PF10431">
    <property type="entry name" value="ClpB_D2-small"/>
    <property type="match status" value="1"/>
</dbReference>
<dbReference type="Pfam" id="PF06689">
    <property type="entry name" value="zf-C4_ClpX"/>
    <property type="match status" value="1"/>
</dbReference>
<dbReference type="SMART" id="SM00382">
    <property type="entry name" value="AAA"/>
    <property type="match status" value="1"/>
</dbReference>
<dbReference type="SMART" id="SM01086">
    <property type="entry name" value="ClpB_D2-small"/>
    <property type="match status" value="1"/>
</dbReference>
<dbReference type="SMART" id="SM00994">
    <property type="entry name" value="zf-C4_ClpX"/>
    <property type="match status" value="1"/>
</dbReference>
<dbReference type="SUPFAM" id="SSF57716">
    <property type="entry name" value="Glucocorticoid receptor-like (DNA-binding domain)"/>
    <property type="match status" value="1"/>
</dbReference>
<dbReference type="SUPFAM" id="SSF52540">
    <property type="entry name" value="P-loop containing nucleoside triphosphate hydrolases"/>
    <property type="match status" value="1"/>
</dbReference>
<dbReference type="PROSITE" id="PS51902">
    <property type="entry name" value="CLPX_ZB"/>
    <property type="match status" value="1"/>
</dbReference>
<keyword id="KW-0067">ATP-binding</keyword>
<keyword id="KW-0143">Chaperone</keyword>
<keyword id="KW-0479">Metal-binding</keyword>
<keyword id="KW-0547">Nucleotide-binding</keyword>
<keyword id="KW-0862">Zinc</keyword>
<accession>B7I5E4</accession>
<name>CLPX_ACIB5</name>
<comment type="function">
    <text evidence="1">ATP-dependent specificity component of the Clp protease. It directs the protease to specific substrates. Can perform chaperone functions in the absence of ClpP.</text>
</comment>
<comment type="subunit">
    <text evidence="1">Component of the ClpX-ClpP complex. Forms a hexameric ring that, in the presence of ATP, binds to fourteen ClpP subunits assembled into a disk-like structure with a central cavity, resembling the structure of eukaryotic proteasomes.</text>
</comment>
<comment type="similarity">
    <text evidence="1">Belongs to the ClpX chaperone family.</text>
</comment>
<organism>
    <name type="scientific">Acinetobacter baumannii (strain AB0057)</name>
    <dbReference type="NCBI Taxonomy" id="480119"/>
    <lineage>
        <taxon>Bacteria</taxon>
        <taxon>Pseudomonadati</taxon>
        <taxon>Pseudomonadota</taxon>
        <taxon>Gammaproteobacteria</taxon>
        <taxon>Moraxellales</taxon>
        <taxon>Moraxellaceae</taxon>
        <taxon>Acinetobacter</taxon>
        <taxon>Acinetobacter calcoaceticus/baumannii complex</taxon>
    </lineage>
</organism>
<feature type="chain" id="PRO_1000189674" description="ATP-dependent Clp protease ATP-binding subunit ClpX">
    <location>
        <begin position="1"/>
        <end position="437"/>
    </location>
</feature>
<feature type="domain" description="ClpX-type ZB" evidence="2">
    <location>
        <begin position="1"/>
        <end position="52"/>
    </location>
</feature>
<feature type="binding site" evidence="2">
    <location>
        <position position="11"/>
    </location>
    <ligand>
        <name>Zn(2+)</name>
        <dbReference type="ChEBI" id="CHEBI:29105"/>
    </ligand>
</feature>
<feature type="binding site" evidence="2">
    <location>
        <position position="14"/>
    </location>
    <ligand>
        <name>Zn(2+)</name>
        <dbReference type="ChEBI" id="CHEBI:29105"/>
    </ligand>
</feature>
<feature type="binding site" evidence="2">
    <location>
        <position position="33"/>
    </location>
    <ligand>
        <name>Zn(2+)</name>
        <dbReference type="ChEBI" id="CHEBI:29105"/>
    </ligand>
</feature>
<feature type="binding site" evidence="2">
    <location>
        <position position="36"/>
    </location>
    <ligand>
        <name>Zn(2+)</name>
        <dbReference type="ChEBI" id="CHEBI:29105"/>
    </ligand>
</feature>
<feature type="binding site" evidence="1">
    <location>
        <begin position="119"/>
        <end position="126"/>
    </location>
    <ligand>
        <name>ATP</name>
        <dbReference type="ChEBI" id="CHEBI:30616"/>
    </ligand>
</feature>